<comment type="function">
    <text evidence="1">Required for the post-translational delivery of tail-anchored (TA) proteins to the endoplasmic reticulum. Acts as a membrane receptor for soluble GET3, which recognizes and selectively binds the transmembrane domain of TA proteins in the cytosol.</text>
</comment>
<comment type="subunit">
    <text evidence="1">Interacts with GET3.</text>
</comment>
<comment type="subcellular location">
    <subcellularLocation>
        <location evidence="1">Endoplasmic reticulum membrane</location>
        <topology evidence="1">Multi-pass membrane protein</topology>
    </subcellularLocation>
</comment>
<comment type="similarity">
    <text evidence="1">Belongs to the WRB/GET1 family.</text>
</comment>
<reference key="1">
    <citation type="journal article" date="2007" name="Plant Cell">
        <title>Dothideomycete-plant interactions illuminated by genome sequencing and EST analysis of the wheat pathogen Stagonospora nodorum.</title>
        <authorList>
            <person name="Hane J.K."/>
            <person name="Lowe R.G.T."/>
            <person name="Solomon P.S."/>
            <person name="Tan K.-C."/>
            <person name="Schoch C.L."/>
            <person name="Spatafora J.W."/>
            <person name="Crous P.W."/>
            <person name="Kodira C.D."/>
            <person name="Birren B.W."/>
            <person name="Galagan J.E."/>
            <person name="Torriani S.F.F."/>
            <person name="McDonald B.A."/>
            <person name="Oliver R.P."/>
        </authorList>
    </citation>
    <scope>NUCLEOTIDE SEQUENCE [LARGE SCALE GENOMIC DNA]</scope>
    <source>
        <strain>SN15 / ATCC MYA-4574 / FGSC 10173</strain>
    </source>
</reference>
<feature type="chain" id="PRO_0000388608" description="Protein GET1">
    <location>
        <begin position="1"/>
        <end position="213"/>
    </location>
</feature>
<feature type="topological domain" description="Lumenal" evidence="1">
    <location>
        <begin position="1"/>
        <end position="4"/>
    </location>
</feature>
<feature type="transmembrane region" description="Helical" evidence="1">
    <location>
        <begin position="5"/>
        <end position="24"/>
    </location>
</feature>
<feature type="topological domain" description="Cytoplasmic" evidence="1">
    <location>
        <begin position="25"/>
        <end position="110"/>
    </location>
</feature>
<feature type="transmembrane region" description="Helical" evidence="1">
    <location>
        <begin position="111"/>
        <end position="131"/>
    </location>
</feature>
<feature type="topological domain" description="Lumenal" evidence="1">
    <location>
        <begin position="132"/>
        <end position="155"/>
    </location>
</feature>
<feature type="transmembrane region" description="Helical" evidence="1">
    <location>
        <begin position="156"/>
        <end position="172"/>
    </location>
</feature>
<feature type="topological domain" description="Cytoplasmic" evidence="1">
    <location>
        <begin position="173"/>
        <end position="213"/>
    </location>
</feature>
<feature type="coiled-coil region" evidence="1">
    <location>
        <begin position="41"/>
        <end position="68"/>
    </location>
</feature>
<protein>
    <recommendedName>
        <fullName evidence="1">Protein GET1</fullName>
    </recommendedName>
    <alternativeName>
        <fullName evidence="1">Guided entry of tail-anchored proteins 1</fullName>
    </alternativeName>
</protein>
<organism>
    <name type="scientific">Phaeosphaeria nodorum (strain SN15 / ATCC MYA-4574 / FGSC 10173)</name>
    <name type="common">Glume blotch fungus</name>
    <name type="synonym">Parastagonospora nodorum</name>
    <dbReference type="NCBI Taxonomy" id="321614"/>
    <lineage>
        <taxon>Eukaryota</taxon>
        <taxon>Fungi</taxon>
        <taxon>Dikarya</taxon>
        <taxon>Ascomycota</taxon>
        <taxon>Pezizomycotina</taxon>
        <taxon>Dothideomycetes</taxon>
        <taxon>Pleosporomycetidae</taxon>
        <taxon>Pleosporales</taxon>
        <taxon>Pleosporineae</taxon>
        <taxon>Phaeosphaeriaceae</taxon>
        <taxon>Parastagonospora</taxon>
    </lineage>
</organism>
<name>GET1_PHANO</name>
<accession>Q0UTI3</accession>
<keyword id="KW-0175">Coiled coil</keyword>
<keyword id="KW-0256">Endoplasmic reticulum</keyword>
<keyword id="KW-0472">Membrane</keyword>
<keyword id="KW-0812">Transmembrane</keyword>
<keyword id="KW-1133">Transmembrane helix</keyword>
<keyword id="KW-0813">Transport</keyword>
<gene>
    <name evidence="1" type="primary">GET1</name>
    <name type="ORF">SNOG_04931</name>
</gene>
<sequence length="213" mass="23709">MPSLLLVVFILQFLLHIINTVGASTVNDLLWILYNKLPTPTSSSAQKAQKLKKEIVQLKRELGATSAQDNFSKWAKLDRQHNKAMAEFQKIDGSLRGHQTAFTSAVSTLRWLGTQGLRFVLQFWFAKSPMFWMPAGWLPFYVEWILSFPRAPLGSVSINVWGIACASMIALAAEGLAAVWVLATKRPTPIATEKKEAMAFAADQKSSGEKKEL</sequence>
<dbReference type="EMBL" id="CH445331">
    <property type="protein sequence ID" value="EAT87322.1"/>
    <property type="molecule type" value="Genomic_DNA"/>
</dbReference>
<dbReference type="RefSeq" id="XP_001795344.1">
    <property type="nucleotide sequence ID" value="XM_001795292.1"/>
</dbReference>
<dbReference type="SMR" id="Q0UTI3"/>
<dbReference type="FunCoup" id="Q0UTI3">
    <property type="interactions" value="23"/>
</dbReference>
<dbReference type="STRING" id="321614.Q0UTI3"/>
<dbReference type="EnsemblFungi" id="SNOT_04931">
    <property type="protein sequence ID" value="SNOT_04931"/>
    <property type="gene ID" value="SNOG_04931"/>
</dbReference>
<dbReference type="GeneID" id="5972219"/>
<dbReference type="KEGG" id="pno:SNOG_04931"/>
<dbReference type="VEuPathDB" id="FungiDB:JI435_049310"/>
<dbReference type="eggNOG" id="KOG4253">
    <property type="taxonomic scope" value="Eukaryota"/>
</dbReference>
<dbReference type="HOGENOM" id="CLU_089418_1_0_1"/>
<dbReference type="InParanoid" id="Q0UTI3"/>
<dbReference type="OMA" id="AEWIISF"/>
<dbReference type="OrthoDB" id="69461at2759"/>
<dbReference type="Proteomes" id="UP000001055">
    <property type="component" value="Unassembled WGS sequence"/>
</dbReference>
<dbReference type="GO" id="GO:0005789">
    <property type="term" value="C:endoplasmic reticulum membrane"/>
    <property type="evidence" value="ECO:0007669"/>
    <property type="project" value="UniProtKB-SubCell"/>
</dbReference>
<dbReference type="GO" id="GO:0043529">
    <property type="term" value="C:GET complex"/>
    <property type="evidence" value="ECO:0000318"/>
    <property type="project" value="GO_Central"/>
</dbReference>
<dbReference type="GO" id="GO:0043495">
    <property type="term" value="F:protein-membrane adaptor activity"/>
    <property type="evidence" value="ECO:0000318"/>
    <property type="project" value="GO_Central"/>
</dbReference>
<dbReference type="GO" id="GO:0071816">
    <property type="term" value="P:tail-anchored membrane protein insertion into ER membrane"/>
    <property type="evidence" value="ECO:0000318"/>
    <property type="project" value="GO_Central"/>
</dbReference>
<dbReference type="FunFam" id="1.10.287.660:FF:000006">
    <property type="entry name" value="Protein GET1"/>
    <property type="match status" value="1"/>
</dbReference>
<dbReference type="Gene3D" id="1.10.287.660">
    <property type="entry name" value="Helix hairpin bin"/>
    <property type="match status" value="1"/>
</dbReference>
<dbReference type="HAMAP" id="MF_03113">
    <property type="entry name" value="Get1"/>
    <property type="match status" value="1"/>
</dbReference>
<dbReference type="InterPro" id="IPR028945">
    <property type="entry name" value="Get1"/>
</dbReference>
<dbReference type="InterPro" id="IPR027538">
    <property type="entry name" value="Get1_fungi"/>
</dbReference>
<dbReference type="InterPro" id="IPR029012">
    <property type="entry name" value="Helix_hairpin_bin_sf"/>
</dbReference>
<dbReference type="PANTHER" id="PTHR42650:SF1">
    <property type="entry name" value="GUIDED ENTRY OF TAIL-ANCHORED PROTEINS FACTOR 1"/>
    <property type="match status" value="1"/>
</dbReference>
<dbReference type="PANTHER" id="PTHR42650">
    <property type="entry name" value="TAIL-ANCHORED PROTEIN INSERTION RECEPTOR WRB"/>
    <property type="match status" value="1"/>
</dbReference>
<dbReference type="Pfam" id="PF04420">
    <property type="entry name" value="CHD5"/>
    <property type="match status" value="1"/>
</dbReference>
<proteinExistence type="inferred from homology"/>
<evidence type="ECO:0000255" key="1">
    <source>
        <dbReference type="HAMAP-Rule" id="MF_03113"/>
    </source>
</evidence>